<feature type="chain" id="PRO_0000179316" description="Trigger factor">
    <location>
        <begin position="1"/>
        <end position="437"/>
    </location>
</feature>
<feature type="domain" description="PPIase FKBP-type" evidence="1">
    <location>
        <begin position="163"/>
        <end position="248"/>
    </location>
</feature>
<keyword id="KW-0131">Cell cycle</keyword>
<keyword id="KW-0132">Cell division</keyword>
<keyword id="KW-0143">Chaperone</keyword>
<keyword id="KW-0963">Cytoplasm</keyword>
<keyword id="KW-0413">Isomerase</keyword>
<keyword id="KW-1185">Reference proteome</keyword>
<keyword id="KW-0697">Rotamase</keyword>
<protein>
    <recommendedName>
        <fullName evidence="1">Trigger factor</fullName>
        <shortName evidence="1">TF</shortName>
        <ecNumber evidence="1">5.2.1.8</ecNumber>
    </recommendedName>
    <alternativeName>
        <fullName evidence="1">PPIase</fullName>
    </alternativeName>
</protein>
<accession>Q6MH01</accession>
<organism>
    <name type="scientific">Bdellovibrio bacteriovorus (strain ATCC 15356 / DSM 50701 / NCIMB 9529 / HD100)</name>
    <dbReference type="NCBI Taxonomy" id="264462"/>
    <lineage>
        <taxon>Bacteria</taxon>
        <taxon>Pseudomonadati</taxon>
        <taxon>Bdellovibrionota</taxon>
        <taxon>Bdellovibrionia</taxon>
        <taxon>Bdellovibrionales</taxon>
        <taxon>Pseudobdellovibrionaceae</taxon>
        <taxon>Bdellovibrio</taxon>
    </lineage>
</organism>
<sequence length="437" mass="49199">MKSNVEKVSNLSRKLNIEVPAAAVQTAFQKIFNGIQKEVTIKGFRKGKAPLATVKSLYGDRVKQDVVQDLIQKHYAEALNEHKLEPISYPEFEFADPTENKDFSFSAAFDVRPEITLKKYEGLEVEKEKAEFDPKKIDQVLENIRASRATFEVVAEDRAVKMGDIAVINFEGFMGGAPLENGSGTDHHLELGAKQFIEGFEDGIVGMKKGETKTLSLKFPDPYHSAELAGKPVEFKVTLNQIKAKVLPELTNEFLATLGGPSDLETLKKSIQEDLEQTETKRIEDAFKNRLLKTLVKENPVEVPPSLMKEQKASLVEDFKKRMSEQGMGPDDFASYVEKWDGDFEKTAAEMIQSSFLVDAIAKKHDLFCKKEDLDAKFAEYAQQTGIEESRIKEFYGRPEQASRLTYMLTEEKVIAFLNKSVKVKEVPAGSLKEENH</sequence>
<reference key="1">
    <citation type="journal article" date="2004" name="Science">
        <title>A predator unmasked: life cycle of Bdellovibrio bacteriovorus from a genomic perspective.</title>
        <authorList>
            <person name="Rendulic S."/>
            <person name="Jagtap P."/>
            <person name="Rosinus A."/>
            <person name="Eppinger M."/>
            <person name="Baar C."/>
            <person name="Lanz C."/>
            <person name="Keller H."/>
            <person name="Lambert C."/>
            <person name="Evans K.J."/>
            <person name="Goesmann A."/>
            <person name="Meyer F."/>
            <person name="Sockett R.E."/>
            <person name="Schuster S.C."/>
        </authorList>
    </citation>
    <scope>NUCLEOTIDE SEQUENCE [LARGE SCALE GENOMIC DNA]</scope>
    <source>
        <strain>ATCC 15356 / DSM 50701 / NCIMB 9529 / HD100</strain>
    </source>
</reference>
<name>TIG_BDEBA</name>
<proteinExistence type="inferred from homology"/>
<dbReference type="EC" id="5.2.1.8" evidence="1"/>
<dbReference type="EMBL" id="BX842656">
    <property type="protein sequence ID" value="CAE81126.1"/>
    <property type="molecule type" value="Genomic_DNA"/>
</dbReference>
<dbReference type="RefSeq" id="WP_011166069.1">
    <property type="nucleotide sequence ID" value="NC_005363.1"/>
</dbReference>
<dbReference type="SMR" id="Q6MH01"/>
<dbReference type="STRING" id="264462.Bd3764"/>
<dbReference type="GeneID" id="93014542"/>
<dbReference type="KEGG" id="bba:Bd3764"/>
<dbReference type="eggNOG" id="COG0544">
    <property type="taxonomic scope" value="Bacteria"/>
</dbReference>
<dbReference type="HOGENOM" id="CLU_033058_3_2_7"/>
<dbReference type="Proteomes" id="UP000008080">
    <property type="component" value="Chromosome"/>
</dbReference>
<dbReference type="GO" id="GO:0005737">
    <property type="term" value="C:cytoplasm"/>
    <property type="evidence" value="ECO:0007669"/>
    <property type="project" value="UniProtKB-SubCell"/>
</dbReference>
<dbReference type="GO" id="GO:0003755">
    <property type="term" value="F:peptidyl-prolyl cis-trans isomerase activity"/>
    <property type="evidence" value="ECO:0007669"/>
    <property type="project" value="UniProtKB-UniRule"/>
</dbReference>
<dbReference type="GO" id="GO:0044183">
    <property type="term" value="F:protein folding chaperone"/>
    <property type="evidence" value="ECO:0007669"/>
    <property type="project" value="TreeGrafter"/>
</dbReference>
<dbReference type="GO" id="GO:0043022">
    <property type="term" value="F:ribosome binding"/>
    <property type="evidence" value="ECO:0007669"/>
    <property type="project" value="TreeGrafter"/>
</dbReference>
<dbReference type="GO" id="GO:0051083">
    <property type="term" value="P:'de novo' cotranslational protein folding"/>
    <property type="evidence" value="ECO:0007669"/>
    <property type="project" value="TreeGrafter"/>
</dbReference>
<dbReference type="GO" id="GO:0051301">
    <property type="term" value="P:cell division"/>
    <property type="evidence" value="ECO:0007669"/>
    <property type="project" value="UniProtKB-KW"/>
</dbReference>
<dbReference type="GO" id="GO:0061077">
    <property type="term" value="P:chaperone-mediated protein folding"/>
    <property type="evidence" value="ECO:0007669"/>
    <property type="project" value="TreeGrafter"/>
</dbReference>
<dbReference type="GO" id="GO:0015031">
    <property type="term" value="P:protein transport"/>
    <property type="evidence" value="ECO:0007669"/>
    <property type="project" value="UniProtKB-UniRule"/>
</dbReference>
<dbReference type="GO" id="GO:0043335">
    <property type="term" value="P:protein unfolding"/>
    <property type="evidence" value="ECO:0007669"/>
    <property type="project" value="TreeGrafter"/>
</dbReference>
<dbReference type="FunFam" id="3.10.50.40:FF:000001">
    <property type="entry name" value="Trigger factor"/>
    <property type="match status" value="1"/>
</dbReference>
<dbReference type="Gene3D" id="3.10.50.40">
    <property type="match status" value="1"/>
</dbReference>
<dbReference type="Gene3D" id="3.30.70.1050">
    <property type="entry name" value="Trigger factor ribosome-binding domain"/>
    <property type="match status" value="1"/>
</dbReference>
<dbReference type="Gene3D" id="1.10.3120.10">
    <property type="entry name" value="Trigger factor, C-terminal domain"/>
    <property type="match status" value="1"/>
</dbReference>
<dbReference type="HAMAP" id="MF_00303">
    <property type="entry name" value="Trigger_factor_Tig"/>
    <property type="match status" value="1"/>
</dbReference>
<dbReference type="InterPro" id="IPR046357">
    <property type="entry name" value="PPIase_dom_sf"/>
</dbReference>
<dbReference type="InterPro" id="IPR001179">
    <property type="entry name" value="PPIase_FKBP_dom"/>
</dbReference>
<dbReference type="InterPro" id="IPR005215">
    <property type="entry name" value="Trig_fac"/>
</dbReference>
<dbReference type="InterPro" id="IPR008880">
    <property type="entry name" value="Trigger_fac_C"/>
</dbReference>
<dbReference type="InterPro" id="IPR037041">
    <property type="entry name" value="Trigger_fac_C_sf"/>
</dbReference>
<dbReference type="InterPro" id="IPR008881">
    <property type="entry name" value="Trigger_fac_ribosome-bd_bac"/>
</dbReference>
<dbReference type="InterPro" id="IPR036611">
    <property type="entry name" value="Trigger_fac_ribosome-bd_sf"/>
</dbReference>
<dbReference type="InterPro" id="IPR027304">
    <property type="entry name" value="Trigger_fact/SurA_dom_sf"/>
</dbReference>
<dbReference type="NCBIfam" id="TIGR00115">
    <property type="entry name" value="tig"/>
    <property type="match status" value="1"/>
</dbReference>
<dbReference type="PANTHER" id="PTHR30560">
    <property type="entry name" value="TRIGGER FACTOR CHAPERONE AND PEPTIDYL-PROLYL CIS/TRANS ISOMERASE"/>
    <property type="match status" value="1"/>
</dbReference>
<dbReference type="PANTHER" id="PTHR30560:SF3">
    <property type="entry name" value="TRIGGER FACTOR-LIKE PROTEIN TIG, CHLOROPLASTIC"/>
    <property type="match status" value="1"/>
</dbReference>
<dbReference type="Pfam" id="PF00254">
    <property type="entry name" value="FKBP_C"/>
    <property type="match status" value="1"/>
</dbReference>
<dbReference type="Pfam" id="PF05698">
    <property type="entry name" value="Trigger_C"/>
    <property type="match status" value="1"/>
</dbReference>
<dbReference type="Pfam" id="PF05697">
    <property type="entry name" value="Trigger_N"/>
    <property type="match status" value="1"/>
</dbReference>
<dbReference type="PIRSF" id="PIRSF003095">
    <property type="entry name" value="Trigger_factor"/>
    <property type="match status" value="1"/>
</dbReference>
<dbReference type="SUPFAM" id="SSF54534">
    <property type="entry name" value="FKBP-like"/>
    <property type="match status" value="1"/>
</dbReference>
<dbReference type="SUPFAM" id="SSF109998">
    <property type="entry name" value="Triger factor/SurA peptide-binding domain-like"/>
    <property type="match status" value="1"/>
</dbReference>
<dbReference type="SUPFAM" id="SSF102735">
    <property type="entry name" value="Trigger factor ribosome-binding domain"/>
    <property type="match status" value="1"/>
</dbReference>
<dbReference type="PROSITE" id="PS50059">
    <property type="entry name" value="FKBP_PPIASE"/>
    <property type="match status" value="1"/>
</dbReference>
<evidence type="ECO:0000255" key="1">
    <source>
        <dbReference type="HAMAP-Rule" id="MF_00303"/>
    </source>
</evidence>
<gene>
    <name evidence="1" type="primary">tig</name>
    <name type="ordered locus">Bd3764</name>
</gene>
<comment type="function">
    <text evidence="1">Involved in protein export. Acts as a chaperone by maintaining the newly synthesized protein in an open conformation. Functions as a peptidyl-prolyl cis-trans isomerase.</text>
</comment>
<comment type="catalytic activity">
    <reaction evidence="1">
        <text>[protein]-peptidylproline (omega=180) = [protein]-peptidylproline (omega=0)</text>
        <dbReference type="Rhea" id="RHEA:16237"/>
        <dbReference type="Rhea" id="RHEA-COMP:10747"/>
        <dbReference type="Rhea" id="RHEA-COMP:10748"/>
        <dbReference type="ChEBI" id="CHEBI:83833"/>
        <dbReference type="ChEBI" id="CHEBI:83834"/>
        <dbReference type="EC" id="5.2.1.8"/>
    </reaction>
</comment>
<comment type="subcellular location">
    <subcellularLocation>
        <location>Cytoplasm</location>
    </subcellularLocation>
    <text evidence="1">About half TF is bound to the ribosome near the polypeptide exit tunnel while the other half is free in the cytoplasm.</text>
</comment>
<comment type="domain">
    <text evidence="1">Consists of 3 domains; the N-terminus binds the ribosome, the middle domain has PPIase activity, while the C-terminus has intrinsic chaperone activity on its own.</text>
</comment>
<comment type="similarity">
    <text evidence="1">Belongs to the FKBP-type PPIase family. Tig subfamily.</text>
</comment>